<name>GPA2_YEAST</name>
<proteinExistence type="evidence at protein level"/>
<keyword id="KW-1003">Cell membrane</keyword>
<keyword id="KW-0342">GTP-binding</keyword>
<keyword id="KW-0378">Hydrolase</keyword>
<keyword id="KW-0449">Lipoprotein</keyword>
<keyword id="KW-0460">Magnesium</keyword>
<keyword id="KW-0472">Membrane</keyword>
<keyword id="KW-0479">Metal-binding</keyword>
<keyword id="KW-0519">Myristate</keyword>
<keyword id="KW-0547">Nucleotide-binding</keyword>
<keyword id="KW-0564">Palmitate</keyword>
<keyword id="KW-1185">Reference proteome</keyword>
<keyword id="KW-0807">Transducer</keyword>
<reference key="1">
    <citation type="journal article" date="1988" name="Proc. Natl. Acad. Sci. U.S.A.">
        <title>Isolation of a second yeast Saccharomyces cerevisiae gene (GPA2) coding for guanine nucleotide-binding regulatory protein: studies on its structure and possible functions.</title>
        <authorList>
            <person name="Nakafuku M."/>
            <person name="Obara T."/>
            <person name="Kaibuchi K."/>
            <person name="Miyajima I."/>
            <person name="Miyajima A."/>
            <person name="Itoh H."/>
            <person name="Nakamura S."/>
            <person name="Arai K."/>
            <person name="Matsumoto K."/>
            <person name="Kaziro Y."/>
        </authorList>
    </citation>
    <scope>NUCLEOTIDE SEQUENCE [GENOMIC DNA]</scope>
</reference>
<reference key="2">
    <citation type="journal article" date="1997" name="Nature">
        <title>The nucleotide sequence of Saccharomyces cerevisiae chromosome V.</title>
        <authorList>
            <person name="Dietrich F.S."/>
            <person name="Mulligan J.T."/>
            <person name="Hennessy K.M."/>
            <person name="Yelton M.A."/>
            <person name="Allen E."/>
            <person name="Araujo R."/>
            <person name="Aviles E."/>
            <person name="Berno A."/>
            <person name="Brennan T."/>
            <person name="Carpenter J."/>
            <person name="Chen E."/>
            <person name="Cherry J.M."/>
            <person name="Chung E."/>
            <person name="Duncan M."/>
            <person name="Guzman E."/>
            <person name="Hartzell G."/>
            <person name="Hunicke-Smith S."/>
            <person name="Hyman R.W."/>
            <person name="Kayser A."/>
            <person name="Komp C."/>
            <person name="Lashkari D."/>
            <person name="Lew H."/>
            <person name="Lin D."/>
            <person name="Mosedale D."/>
            <person name="Nakahara K."/>
            <person name="Namath A."/>
            <person name="Norgren R."/>
            <person name="Oefner P."/>
            <person name="Oh C."/>
            <person name="Petel F.X."/>
            <person name="Roberts D."/>
            <person name="Sehl P."/>
            <person name="Schramm S."/>
            <person name="Shogren T."/>
            <person name="Smith V."/>
            <person name="Taylor P."/>
            <person name="Wei Y."/>
            <person name="Botstein D."/>
            <person name="Davis R.W."/>
        </authorList>
    </citation>
    <scope>NUCLEOTIDE SEQUENCE [LARGE SCALE GENOMIC DNA]</scope>
    <source>
        <strain>ATCC 204508 / S288c</strain>
    </source>
</reference>
<reference key="3">
    <citation type="journal article" date="2014" name="G3 (Bethesda)">
        <title>The reference genome sequence of Saccharomyces cerevisiae: Then and now.</title>
        <authorList>
            <person name="Engel S.R."/>
            <person name="Dietrich F.S."/>
            <person name="Fisk D.G."/>
            <person name="Binkley G."/>
            <person name="Balakrishnan R."/>
            <person name="Costanzo M.C."/>
            <person name="Dwight S.S."/>
            <person name="Hitz B.C."/>
            <person name="Karra K."/>
            <person name="Nash R.S."/>
            <person name="Weng S."/>
            <person name="Wong E.D."/>
            <person name="Lloyd P."/>
            <person name="Skrzypek M.S."/>
            <person name="Miyasato S.R."/>
            <person name="Simison M."/>
            <person name="Cherry J.M."/>
        </authorList>
    </citation>
    <scope>GENOME REANNOTATION</scope>
    <source>
        <strain>ATCC 204508 / S288c</strain>
    </source>
</reference>
<reference key="4">
    <citation type="journal article" date="1999" name="EMBO J.">
        <title>A novel regulator of G protein signalling in yeast, Rgs2, downregulates glucose-activation of the cAMP pathway through direct inhibition of Gpa2.</title>
        <authorList>
            <person name="Versele M."/>
            <person name="de Winde J.H."/>
            <person name="Thevelein J.M."/>
        </authorList>
    </citation>
    <scope>FUNCTION</scope>
    <scope>INTERACTION WITH RGS2</scope>
    <scope>MUTAGENESIS OF GLY-132</scope>
</reference>
<reference key="5">
    <citation type="journal article" date="2002" name="Mol. Cell">
        <title>The Galpha protein Gpa2 controls yeast differentiation by interacting with kelch repeat proteins that mimic Gbeta subunits.</title>
        <authorList>
            <person name="Harashima T."/>
            <person name="Heitman J."/>
        </authorList>
    </citation>
    <scope>INTERACTION WITH GPG1; GPB1 AND GPB2</scope>
    <scope>MUTAGENESIS OF GLY-132; GLY-299 AND GLN-300</scope>
</reference>
<reference key="6">
    <citation type="journal article" date="2003" name="Nature">
        <title>Global analysis of protein localization in budding yeast.</title>
        <authorList>
            <person name="Huh W.-K."/>
            <person name="Falvo J.V."/>
            <person name="Gerke L.C."/>
            <person name="Carroll A.S."/>
            <person name="Howson R.W."/>
            <person name="Weissman J.S."/>
            <person name="O'Shea E.K."/>
        </authorList>
    </citation>
    <scope>SUBCELLULAR LOCATION [LARGE SCALE ANALYSIS]</scope>
</reference>
<reference key="7">
    <citation type="journal article" date="2003" name="Nature">
        <title>Global analysis of protein expression in yeast.</title>
        <authorList>
            <person name="Ghaemmaghami S."/>
            <person name="Huh W.-K."/>
            <person name="Bower K."/>
            <person name="Howson R.W."/>
            <person name="Belle A."/>
            <person name="Dephoure N."/>
            <person name="O'Shea E.K."/>
            <person name="Weissman J.S."/>
        </authorList>
    </citation>
    <scope>LEVEL OF PROTEIN EXPRESSION [LARGE SCALE ANALYSIS]</scope>
</reference>
<reference key="8">
    <citation type="journal article" date="2005" name="Mol. Biol. Cell">
        <title>Galpha subunit Gpa2 recruits kelch repeat subunits that inhibit receptor-G protein coupling during cAMP-induced dimorphic transitions in Saccharomyces cerevisiae.</title>
        <authorList>
            <person name="Harashima T."/>
            <person name="Heitman J."/>
        </authorList>
    </citation>
    <scope>FUNCTION</scope>
    <scope>MYRISTOYLATION AT GLY-2</scope>
    <scope>PALMITOYLATION AT CYS-4</scope>
    <scope>MUTAGENESIS OF GLY-2; CYS-4; SER-6 AND GLY-299</scope>
    <scope>SUBCELLULAR LOCATION</scope>
    <scope>INTERACTION WITH GPB2 AND GPR1</scope>
</reference>
<reference key="9">
    <citation type="journal article" date="2008" name="Mol. Cell. Proteomics">
        <title>A multidimensional chromatography technology for in-depth phosphoproteome analysis.</title>
        <authorList>
            <person name="Albuquerque C.P."/>
            <person name="Smolka M.B."/>
            <person name="Payne S.H."/>
            <person name="Bafna V."/>
            <person name="Eng J."/>
            <person name="Zhou H."/>
        </authorList>
    </citation>
    <scope>IDENTIFICATION BY MASS SPECTROMETRY [LARGE SCALE ANALYSIS]</scope>
</reference>
<reference key="10">
    <citation type="journal article" date="2009" name="Science">
        <title>Global analysis of Cdk1 substrate phosphorylation sites provides insights into evolution.</title>
        <authorList>
            <person name="Holt L.J."/>
            <person name="Tuch B.B."/>
            <person name="Villen J."/>
            <person name="Johnson A.D."/>
            <person name="Gygi S.P."/>
            <person name="Morgan D.O."/>
        </authorList>
    </citation>
    <scope>IDENTIFICATION BY MASS SPECTROMETRY [LARGE SCALE ANALYSIS]</scope>
</reference>
<accession>P10823</accession>
<accession>D3DLR9</accession>
<dbReference type="EMBL" id="J03609">
    <property type="protein sequence ID" value="AAA34651.1"/>
    <property type="molecule type" value="Genomic_DNA"/>
</dbReference>
<dbReference type="EMBL" id="U18778">
    <property type="protein sequence ID" value="AAB64553.1"/>
    <property type="molecule type" value="Genomic_DNA"/>
</dbReference>
<dbReference type="EMBL" id="BK006939">
    <property type="protein sequence ID" value="DAA07673.1"/>
    <property type="molecule type" value="Genomic_DNA"/>
</dbReference>
<dbReference type="PIR" id="S50478">
    <property type="entry name" value="S50478"/>
</dbReference>
<dbReference type="RefSeq" id="NP_010937.3">
    <property type="nucleotide sequence ID" value="NM_001178911.3"/>
</dbReference>
<dbReference type="SMR" id="P10823"/>
<dbReference type="BioGRID" id="36754">
    <property type="interactions" value="93"/>
</dbReference>
<dbReference type="DIP" id="DIP-4346N"/>
<dbReference type="FunCoup" id="P10823">
    <property type="interactions" value="509"/>
</dbReference>
<dbReference type="IntAct" id="P10823">
    <property type="interactions" value="51"/>
</dbReference>
<dbReference type="MINT" id="P10823"/>
<dbReference type="STRING" id="4932.YER020W"/>
<dbReference type="TCDB" id="8.A.92.1.15">
    <property type="family name" value="the g-protein AlphaBetaGama complex (gpc) family"/>
</dbReference>
<dbReference type="GlyGen" id="P10823">
    <property type="glycosylation" value="1 site"/>
</dbReference>
<dbReference type="iPTMnet" id="P10823"/>
<dbReference type="SwissPalm" id="P10823"/>
<dbReference type="PaxDb" id="4932-YER020W"/>
<dbReference type="PeptideAtlas" id="P10823"/>
<dbReference type="EnsemblFungi" id="YER020W_mRNA">
    <property type="protein sequence ID" value="YER020W"/>
    <property type="gene ID" value="YER020W"/>
</dbReference>
<dbReference type="GeneID" id="856741"/>
<dbReference type="KEGG" id="sce:YER020W"/>
<dbReference type="AGR" id="SGD:S000000822"/>
<dbReference type="SGD" id="S000000822">
    <property type="gene designation" value="GPA2"/>
</dbReference>
<dbReference type="VEuPathDB" id="FungiDB:YER020W"/>
<dbReference type="eggNOG" id="KOG0082">
    <property type="taxonomic scope" value="Eukaryota"/>
</dbReference>
<dbReference type="HOGENOM" id="CLU_014184_0_2_1"/>
<dbReference type="InParanoid" id="P10823"/>
<dbReference type="OMA" id="FMAIQAM"/>
<dbReference type="OrthoDB" id="5817230at2759"/>
<dbReference type="BioCyc" id="YEAST:G3O-30204-MONOMER"/>
<dbReference type="Reactome" id="R-SCE-2514859">
    <property type="pathway name" value="Inactivation, recovery and regulation of the phototransduction cascade"/>
</dbReference>
<dbReference type="Reactome" id="R-SCE-418594">
    <property type="pathway name" value="G alpha (i) signalling events"/>
</dbReference>
<dbReference type="Reactome" id="R-SCE-418597">
    <property type="pathway name" value="G alpha (z) signalling events"/>
</dbReference>
<dbReference type="BioGRID-ORCS" id="856741">
    <property type="hits" value="3 hits in 10 CRISPR screens"/>
</dbReference>
<dbReference type="PRO" id="PR:P10823"/>
<dbReference type="Proteomes" id="UP000002311">
    <property type="component" value="Chromosome V"/>
</dbReference>
<dbReference type="RNAct" id="P10823">
    <property type="molecule type" value="protein"/>
</dbReference>
<dbReference type="GO" id="GO:0005737">
    <property type="term" value="C:cytoplasm"/>
    <property type="evidence" value="ECO:0000314"/>
    <property type="project" value="SGD"/>
</dbReference>
<dbReference type="GO" id="GO:0005829">
    <property type="term" value="C:cytosol"/>
    <property type="evidence" value="ECO:0007005"/>
    <property type="project" value="SGD"/>
</dbReference>
<dbReference type="GO" id="GO:0005834">
    <property type="term" value="C:heterotrimeric G-protein complex"/>
    <property type="evidence" value="ECO:0000318"/>
    <property type="project" value="GO_Central"/>
</dbReference>
<dbReference type="GO" id="GO:0005739">
    <property type="term" value="C:mitochondrion"/>
    <property type="evidence" value="ECO:0007005"/>
    <property type="project" value="SGD"/>
</dbReference>
<dbReference type="GO" id="GO:0005886">
    <property type="term" value="C:plasma membrane"/>
    <property type="evidence" value="ECO:0000314"/>
    <property type="project" value="SGD"/>
</dbReference>
<dbReference type="GO" id="GO:0001664">
    <property type="term" value="F:G protein-coupled receptor binding"/>
    <property type="evidence" value="ECO:0000318"/>
    <property type="project" value="GO_Central"/>
</dbReference>
<dbReference type="GO" id="GO:0031683">
    <property type="term" value="F:G-protein beta/gamma-subunit complex binding"/>
    <property type="evidence" value="ECO:0000318"/>
    <property type="project" value="GO_Central"/>
</dbReference>
<dbReference type="GO" id="GO:0005525">
    <property type="term" value="F:GTP binding"/>
    <property type="evidence" value="ECO:0007669"/>
    <property type="project" value="UniProtKB-KW"/>
</dbReference>
<dbReference type="GO" id="GO:0003924">
    <property type="term" value="F:GTPase activity"/>
    <property type="evidence" value="ECO:0000314"/>
    <property type="project" value="SGD"/>
</dbReference>
<dbReference type="GO" id="GO:0046872">
    <property type="term" value="F:metal ion binding"/>
    <property type="evidence" value="ECO:0007669"/>
    <property type="project" value="UniProtKB-KW"/>
</dbReference>
<dbReference type="GO" id="GO:0007189">
    <property type="term" value="P:adenylate cyclase-activating G protein-coupled receptor signaling pathway"/>
    <property type="evidence" value="ECO:0000315"/>
    <property type="project" value="SGD"/>
</dbReference>
<dbReference type="GO" id="GO:0030437">
    <property type="term" value="P:ascospore formation"/>
    <property type="evidence" value="ECO:0000315"/>
    <property type="project" value="SGD"/>
</dbReference>
<dbReference type="GO" id="GO:0010255">
    <property type="term" value="P:glucose mediated signaling pathway"/>
    <property type="evidence" value="ECO:0000315"/>
    <property type="project" value="SGD"/>
</dbReference>
<dbReference type="GO" id="GO:0009757">
    <property type="term" value="P:hexose mediated signaling"/>
    <property type="evidence" value="ECO:0000315"/>
    <property type="project" value="SGD"/>
</dbReference>
<dbReference type="GO" id="GO:0001403">
    <property type="term" value="P:invasive growth in response to glucose limitation"/>
    <property type="evidence" value="ECO:0000315"/>
    <property type="project" value="SGD"/>
</dbReference>
<dbReference type="GO" id="GO:0007124">
    <property type="term" value="P:pseudohyphal growth"/>
    <property type="evidence" value="ECO:0000315"/>
    <property type="project" value="SGD"/>
</dbReference>
<dbReference type="GO" id="GO:0008361">
    <property type="term" value="P:regulation of cell size"/>
    <property type="evidence" value="ECO:0007001"/>
    <property type="project" value="SGD"/>
</dbReference>
<dbReference type="GO" id="GO:0007165">
    <property type="term" value="P:signal transduction"/>
    <property type="evidence" value="ECO:0000315"/>
    <property type="project" value="SGD"/>
</dbReference>
<dbReference type="CDD" id="cd00066">
    <property type="entry name" value="G-alpha"/>
    <property type="match status" value="1"/>
</dbReference>
<dbReference type="FunFam" id="1.10.400.10:FF:000007">
    <property type="entry name" value="Guanine nucleotide-binding protein subunit alpha"/>
    <property type="match status" value="1"/>
</dbReference>
<dbReference type="FunFam" id="3.40.50.300:FF:000181">
    <property type="entry name" value="Guanine nucleotide-binding protein subunit alpha"/>
    <property type="match status" value="1"/>
</dbReference>
<dbReference type="Gene3D" id="1.10.400.10">
    <property type="entry name" value="GI Alpha 1, domain 2-like"/>
    <property type="match status" value="1"/>
</dbReference>
<dbReference type="Gene3D" id="3.40.50.300">
    <property type="entry name" value="P-loop containing nucleotide triphosphate hydrolases"/>
    <property type="match status" value="1"/>
</dbReference>
<dbReference type="InterPro" id="IPR002975">
    <property type="entry name" value="Fungi_Gprotein_alpha"/>
</dbReference>
<dbReference type="InterPro" id="IPR001019">
    <property type="entry name" value="Gprotein_alpha_su"/>
</dbReference>
<dbReference type="InterPro" id="IPR011025">
    <property type="entry name" value="GproteinA_insert"/>
</dbReference>
<dbReference type="InterPro" id="IPR027417">
    <property type="entry name" value="P-loop_NTPase"/>
</dbReference>
<dbReference type="PANTHER" id="PTHR10218">
    <property type="entry name" value="GTP-BINDING PROTEIN ALPHA SUBUNIT"/>
    <property type="match status" value="1"/>
</dbReference>
<dbReference type="PANTHER" id="PTHR10218:SF369">
    <property type="entry name" value="GUANINE NUCLEOTIDE-BINDING PROTEIN ALPHA-2 SUBUNIT"/>
    <property type="match status" value="1"/>
</dbReference>
<dbReference type="Pfam" id="PF00503">
    <property type="entry name" value="G-alpha"/>
    <property type="match status" value="1"/>
</dbReference>
<dbReference type="PRINTS" id="PR00318">
    <property type="entry name" value="GPROTEINA"/>
</dbReference>
<dbReference type="PRINTS" id="PR01241">
    <property type="entry name" value="GPROTEINAFNG"/>
</dbReference>
<dbReference type="SMART" id="SM00275">
    <property type="entry name" value="G_alpha"/>
    <property type="match status" value="1"/>
</dbReference>
<dbReference type="SUPFAM" id="SSF52540">
    <property type="entry name" value="P-loop containing nucleoside triphosphate hydrolases"/>
    <property type="match status" value="1"/>
</dbReference>
<dbReference type="SUPFAM" id="SSF47895">
    <property type="entry name" value="Transducin (alpha subunit), insertion domain"/>
    <property type="match status" value="1"/>
</dbReference>
<dbReference type="PROSITE" id="PS51882">
    <property type="entry name" value="G_ALPHA"/>
    <property type="match status" value="1"/>
</dbReference>
<feature type="initiator methionine" description="Removed">
    <location>
        <position position="1"/>
    </location>
</feature>
<feature type="chain" id="PRO_0000203617" description="Guanine nucleotide-binding protein alpha-2 subunit">
    <location>
        <begin position="2"/>
        <end position="449"/>
    </location>
</feature>
<feature type="domain" description="G-alpha" evidence="2">
    <location>
        <begin position="122"/>
        <end position="448"/>
    </location>
</feature>
<feature type="region of interest" description="Disordered" evidence="3">
    <location>
        <begin position="1"/>
        <end position="91"/>
    </location>
</feature>
<feature type="region of interest" description="G1 motif" evidence="2">
    <location>
        <begin position="125"/>
        <end position="138"/>
    </location>
</feature>
<feature type="region of interest" description="G2 motif" evidence="2">
    <location>
        <begin position="268"/>
        <end position="276"/>
    </location>
</feature>
<feature type="region of interest" description="G3 motif" evidence="2">
    <location>
        <begin position="292"/>
        <end position="301"/>
    </location>
</feature>
<feature type="region of interest" description="G4 motif" evidence="2">
    <location>
        <begin position="361"/>
        <end position="368"/>
    </location>
</feature>
<feature type="region of interest" description="G5 motif" evidence="2">
    <location>
        <begin position="418"/>
        <end position="423"/>
    </location>
</feature>
<feature type="compositionally biased region" description="Polar residues" evidence="3">
    <location>
        <begin position="7"/>
        <end position="23"/>
    </location>
</feature>
<feature type="compositionally biased region" description="Polar residues" evidence="3">
    <location>
        <begin position="38"/>
        <end position="48"/>
    </location>
</feature>
<feature type="compositionally biased region" description="Low complexity" evidence="3">
    <location>
        <begin position="49"/>
        <end position="59"/>
    </location>
</feature>
<feature type="compositionally biased region" description="Polar residues" evidence="3">
    <location>
        <begin position="72"/>
        <end position="91"/>
    </location>
</feature>
<feature type="binding site" evidence="1">
    <location>
        <position position="133"/>
    </location>
    <ligand>
        <name>GTP</name>
        <dbReference type="ChEBI" id="CHEBI:37565"/>
    </ligand>
</feature>
<feature type="binding site" evidence="1">
    <location>
        <position position="134"/>
    </location>
    <ligand>
        <name>GTP</name>
        <dbReference type="ChEBI" id="CHEBI:37565"/>
    </ligand>
</feature>
<feature type="binding site" evidence="1">
    <location>
        <position position="135"/>
    </location>
    <ligand>
        <name>GTP</name>
        <dbReference type="ChEBI" id="CHEBI:37565"/>
    </ligand>
</feature>
<feature type="binding site" evidence="1">
    <location>
        <position position="136"/>
    </location>
    <ligand>
        <name>GTP</name>
        <dbReference type="ChEBI" id="CHEBI:37565"/>
    </ligand>
</feature>
<feature type="binding site" evidence="1">
    <location>
        <position position="137"/>
    </location>
    <ligand>
        <name>GTP</name>
        <dbReference type="ChEBI" id="CHEBI:37565"/>
    </ligand>
</feature>
<feature type="binding site" evidence="1">
    <location>
        <position position="137"/>
    </location>
    <ligand>
        <name>Mg(2+)</name>
        <dbReference type="ChEBI" id="CHEBI:18420"/>
    </ligand>
</feature>
<feature type="binding site" evidence="1">
    <location>
        <position position="138"/>
    </location>
    <ligand>
        <name>GTP</name>
        <dbReference type="ChEBI" id="CHEBI:37565"/>
    </ligand>
</feature>
<feature type="binding site" evidence="1">
    <location>
        <position position="245"/>
    </location>
    <ligand>
        <name>GTP</name>
        <dbReference type="ChEBI" id="CHEBI:37565"/>
    </ligand>
</feature>
<feature type="binding site" evidence="1">
    <location>
        <position position="270"/>
    </location>
    <ligand>
        <name>GTP</name>
        <dbReference type="ChEBI" id="CHEBI:37565"/>
    </ligand>
</feature>
<feature type="binding site" evidence="1">
    <location>
        <position position="276"/>
    </location>
    <ligand>
        <name>GTP</name>
        <dbReference type="ChEBI" id="CHEBI:37565"/>
    </ligand>
</feature>
<feature type="binding site" evidence="1">
    <location>
        <position position="276"/>
    </location>
    <ligand>
        <name>Mg(2+)</name>
        <dbReference type="ChEBI" id="CHEBI:18420"/>
    </ligand>
</feature>
<feature type="binding site" evidence="1">
    <location>
        <position position="299"/>
    </location>
    <ligand>
        <name>GTP</name>
        <dbReference type="ChEBI" id="CHEBI:37565"/>
    </ligand>
</feature>
<feature type="binding site" evidence="1">
    <location>
        <position position="365"/>
    </location>
    <ligand>
        <name>GTP</name>
        <dbReference type="ChEBI" id="CHEBI:37565"/>
    </ligand>
</feature>
<feature type="binding site" evidence="1">
    <location>
        <position position="366"/>
    </location>
    <ligand>
        <name>GTP</name>
        <dbReference type="ChEBI" id="CHEBI:37565"/>
    </ligand>
</feature>
<feature type="binding site" evidence="1">
    <location>
        <position position="368"/>
    </location>
    <ligand>
        <name>GTP</name>
        <dbReference type="ChEBI" id="CHEBI:37565"/>
    </ligand>
</feature>
<feature type="binding site" evidence="1">
    <location>
        <position position="420"/>
    </location>
    <ligand>
        <name>GTP</name>
        <dbReference type="ChEBI" id="CHEBI:37565"/>
    </ligand>
</feature>
<feature type="lipid moiety-binding region" description="N-myristoyl glycine" evidence="8">
    <location>
        <position position="2"/>
    </location>
</feature>
<feature type="lipid moiety-binding region" description="S-palmitoyl cysteine" evidence="8">
    <location>
        <position position="4"/>
    </location>
</feature>
<feature type="mutagenesis site" description="Abolishes both palmitoylation and N-myristoylation." evidence="8">
    <original>G</original>
    <variation>A</variation>
    <location>
        <position position="2"/>
    </location>
</feature>
<feature type="mutagenesis site" description="Abolishes palmitoylation but not N-myristoylation." evidence="8">
    <original>C</original>
    <variation>A</variation>
    <location>
        <position position="4"/>
    </location>
</feature>
<feature type="mutagenesis site" description="Abolishes both palmitoylation and N-myristoylation." evidence="8">
    <original>S</original>
    <variation>A</variation>
    <location>
        <position position="6"/>
    </location>
</feature>
<feature type="mutagenesis site" description="Locks GPA2 in its activated GTP-bound form and abrogates the negative control by RGS2." evidence="4 5">
    <original>G</original>
    <variation>V</variation>
    <location>
        <position position="132"/>
    </location>
</feature>
<feature type="mutagenesis site" description="Dominant negative allele unable to undergo the GTP-induced conformational change." evidence="5 8">
    <original>G</original>
    <variation>A</variation>
    <location>
        <position position="299"/>
    </location>
</feature>
<feature type="mutagenesis site" description="Dominant active allele that abolishes intrinsic GTPase activity." evidence="5">
    <original>Q</original>
    <variation>L</variation>
    <location>
        <position position="300"/>
    </location>
</feature>
<feature type="sequence conflict" description="In Ref. 1; AAA34651." evidence="9" ref="1">
    <original>S</original>
    <variation>R</variation>
    <location>
        <position position="375"/>
    </location>
</feature>
<comment type="function">
    <text evidence="4 8">Alpha subunit of the heterotrimeric guanine nucleotide-binding protein (G protein) involved in glucose-induced cAMP signaling. Binds to its cognate transmembrane receptor GPR1, which senses extracellular carbon sources, and activates cAMP-PKA signaling and governs diploid pseudohyphal differentiation and haploid invasive growth. The G protein beta-mimic proteins GPB1 and GPB2 inhibit GPA2-GPR1 coupling, probably to reduce signaling in the absence of glucose.</text>
</comment>
<comment type="cofactor">
    <cofactor evidence="1">
        <name>Mg(2+)</name>
        <dbReference type="ChEBI" id="CHEBI:18420"/>
    </cofactor>
</comment>
<comment type="activity regulation">
    <text>Alternates between an inactive form bound to GDP and an active form bound to GTP. Activated by the G protein coupled receptor (GPCR) GPR1, which serves as a guanine nucleotide-exchange factor (GEF), and inactivated by RGS2, acting as a GTPase-activating protein (GAP) for GPA2.</text>
</comment>
<comment type="subunit">
    <text evidence="4 5 8">G proteins are composed of 3 units; alpha, beta and gamma. The alpha chain contains the guanine nucleotide binding site. GPA2 interacts with the kelch repeat beta-mimic proteins GPB1 and GPB2 and with the gamma subunit GPG1. Interacts with the G protein coupled receptor GPR1. Also interacts with regulators of G protein signaling (RGS) protein RGS2.</text>
</comment>
<comment type="interaction">
    <interactant intactId="EBI-7382">
        <id>P10823</id>
    </interactant>
    <interactant intactId="EBI-5364">
        <id>P08678</id>
        <label>CYR1</label>
    </interactant>
    <organismsDiffer>false</organismsDiffer>
    <experiments>3</experiments>
</comment>
<comment type="interaction">
    <interactant intactId="EBI-7382">
        <id>P10823</id>
    </interactant>
    <interactant intactId="EBI-20711">
        <id>P39717</id>
        <label>GPB2</label>
    </interactant>
    <organismsDiffer>false</organismsDiffer>
    <experiments>4</experiments>
</comment>
<comment type="subcellular location">
    <subcellularLocation>
        <location evidence="6 8">Cell membrane</location>
        <topology evidence="6 8">Lipid-anchor</topology>
        <orientation evidence="6 8">Cytoplasmic side</orientation>
    </subcellularLocation>
</comment>
<comment type="PTM">
    <text evidence="8">Myristoylation at Gly-2 and palmitoylation at Cys-4 are required for membrane localization and function of the protein.</text>
</comment>
<comment type="miscellaneous">
    <text evidence="7">Present with 4570 molecules/cell in log phase SD medium.</text>
</comment>
<comment type="similarity">
    <text evidence="9">Belongs to the G-alpha family. G(q) subfamily.</text>
</comment>
<evidence type="ECO:0000250" key="1">
    <source>
        <dbReference type="UniProtKB" id="P18064"/>
    </source>
</evidence>
<evidence type="ECO:0000255" key="2">
    <source>
        <dbReference type="PROSITE-ProRule" id="PRU01230"/>
    </source>
</evidence>
<evidence type="ECO:0000256" key="3">
    <source>
        <dbReference type="SAM" id="MobiDB-lite"/>
    </source>
</evidence>
<evidence type="ECO:0000269" key="4">
    <source>
    </source>
</evidence>
<evidence type="ECO:0000269" key="5">
    <source>
    </source>
</evidence>
<evidence type="ECO:0000269" key="6">
    <source>
    </source>
</evidence>
<evidence type="ECO:0000269" key="7">
    <source>
    </source>
</evidence>
<evidence type="ECO:0000269" key="8">
    <source>
    </source>
</evidence>
<evidence type="ECO:0000305" key="9"/>
<sequence>MGLCASSEKNGSTPDTQTASAGSDNVGKAKVPPKQEPQKTVRTVNTANQQEKQQQRQQQPSPHNVKDRKEQNGSINNAISPTATANTSGSQQINIDSALRDRSSNVAAQPSLSDASSGSNDKELKVLLLGAGESGKSTVLQQLKILHQNGFSEQEIKEYIPLIYQNLLEIGRNLIQARTRFNVNLEPECELTQQDLSRTMSYEMPNNYTGQFPEDIAGVISTLWALPSTQDLVNGPNASKFYLMDSTPYFMENFTRITSPNYRPTQQDILRSRQMTSGIFDTVIDMGSDIKMHIYDVGGQRSERKKWIHCFDNVTLVIFCVSLSEYDQTLMEDKNQNRFQESLVLFDNIVNSRWFARTSVVLFLNKIDLFAEKLSKVPMENYFPDYTGGSDINKAAKYILWRFVQLNRANLSIYPHVTQATDTSNIRLVFAAIKETILENTLKDSGVLQ</sequence>
<protein>
    <recommendedName>
        <fullName>Guanine nucleotide-binding protein alpha-2 subunit</fullName>
    </recommendedName>
    <alternativeName>
        <fullName>GP2-alpha</fullName>
    </alternativeName>
</protein>
<gene>
    <name type="primary">GPA2</name>
    <name type="synonym">SSP101</name>
    <name type="ordered locus">YER020W</name>
</gene>
<organism>
    <name type="scientific">Saccharomyces cerevisiae (strain ATCC 204508 / S288c)</name>
    <name type="common">Baker's yeast</name>
    <dbReference type="NCBI Taxonomy" id="559292"/>
    <lineage>
        <taxon>Eukaryota</taxon>
        <taxon>Fungi</taxon>
        <taxon>Dikarya</taxon>
        <taxon>Ascomycota</taxon>
        <taxon>Saccharomycotina</taxon>
        <taxon>Saccharomycetes</taxon>
        <taxon>Saccharomycetales</taxon>
        <taxon>Saccharomycetaceae</taxon>
        <taxon>Saccharomyces</taxon>
    </lineage>
</organism>